<accession>Q5ZKP2</accession>
<protein>
    <recommendedName>
        <fullName>Cobalamin trafficking protein CblD</fullName>
    </recommendedName>
    <alternativeName>
        <fullName evidence="1">CblD</fullName>
    </alternativeName>
    <alternativeName>
        <fullName>Methylmalonic aciduria and homocystinuria type D homolog, mitochondrial</fullName>
    </alternativeName>
</protein>
<sequence length="296" mass="33131">MANVLCNRARLVTYLPGFYSLVKRVVNPKAFSTAGSSGSDEPHVAATPPDLCPRTVWPDEVMGPFGPQDQRFQLPGNIGFDCHLNGTAAQRKSQASKSLPDILAEPSPNERHEFVMAQYINEFQGSDVPQKQQVNNAETYFENAKVECAVQACPELLRKDFESMFPEVNANHLTVLTVTQKTKNDMTVWSQEVEDEREMLLENFINGAKEICYAICSEGYWADFIDPSSGLAFFGPYTNNTLFETDERYRHFGFSVDDLGCCKVIRHNIWGTHVVVGSIFTNAEPDSPIMRKLSGN</sequence>
<reference key="1">
    <citation type="journal article" date="2005" name="Genome Biol.">
        <title>Full-length cDNAs from chicken bursal lymphocytes to facilitate gene function analysis.</title>
        <authorList>
            <person name="Caldwell R.B."/>
            <person name="Kierzek A.M."/>
            <person name="Arakawa H."/>
            <person name="Bezzubov Y."/>
            <person name="Zaim J."/>
            <person name="Fiedler P."/>
            <person name="Kutter S."/>
            <person name="Blagodatski A."/>
            <person name="Kostovska D."/>
            <person name="Koter M."/>
            <person name="Plachy J."/>
            <person name="Carninci P."/>
            <person name="Hayashizaki Y."/>
            <person name="Buerstedde J.-M."/>
        </authorList>
    </citation>
    <scope>NUCLEOTIDE SEQUENCE [LARGE SCALE MRNA]</scope>
    <source>
        <strain>CB</strain>
        <tissue>Bursa of Fabricius</tissue>
    </source>
</reference>
<organism>
    <name type="scientific">Gallus gallus</name>
    <name type="common">Chicken</name>
    <dbReference type="NCBI Taxonomy" id="9031"/>
    <lineage>
        <taxon>Eukaryota</taxon>
        <taxon>Metazoa</taxon>
        <taxon>Chordata</taxon>
        <taxon>Craniata</taxon>
        <taxon>Vertebrata</taxon>
        <taxon>Euteleostomi</taxon>
        <taxon>Archelosauria</taxon>
        <taxon>Archosauria</taxon>
        <taxon>Dinosauria</taxon>
        <taxon>Saurischia</taxon>
        <taxon>Theropoda</taxon>
        <taxon>Coelurosauria</taxon>
        <taxon>Aves</taxon>
        <taxon>Neognathae</taxon>
        <taxon>Galloanserae</taxon>
        <taxon>Galliformes</taxon>
        <taxon>Phasianidae</taxon>
        <taxon>Phasianinae</taxon>
        <taxon>Gallus</taxon>
    </lineage>
</organism>
<proteinExistence type="evidence at transcript level"/>
<comment type="function">
    <text evidence="1">Involved in cobalamin metabolism and trafficking. Plays a role in regulating the biosynthesis and the proportion of two coenzymes, methylcob(III)alamin (MeCbl) and 5'-deoxyadenosylcobalamin (AdoCbl). Promotes oxidation of cob(II)alamin bound to MMACHC. The processing of cobalamin in the cytosol occurs in a multiprotein complex composed of at least MMACHC, MMADHC, MTRR (methionine synthase reductase) and MTR (methionine synthase) which may contribute to shuttle safely and efficiently cobalamin towards MTR in order to produce methionine.</text>
</comment>
<comment type="subunit">
    <text evidence="1">Heterodimer with MMACHC. Forms a multiprotein complex with MMACHC, MTR and MTRR.</text>
</comment>
<comment type="subcellular location">
    <subcellularLocation>
        <location evidence="1">Cytoplasm</location>
    </subcellularLocation>
    <subcellularLocation>
        <location evidence="1">Mitochondrion</location>
    </subcellularLocation>
</comment>
<dbReference type="EMBL" id="AJ720042">
    <property type="protein sequence ID" value="CAG31701.1"/>
    <property type="molecule type" value="mRNA"/>
</dbReference>
<dbReference type="RefSeq" id="NP_001008477.1">
    <property type="nucleotide sequence ID" value="NM_001008477.2"/>
</dbReference>
<dbReference type="RefSeq" id="XP_046777514.1">
    <property type="nucleotide sequence ID" value="XM_046921558.1"/>
</dbReference>
<dbReference type="RefSeq" id="XP_046799610.1">
    <property type="nucleotide sequence ID" value="XM_046943654.1"/>
</dbReference>
<dbReference type="SMR" id="Q5ZKP2"/>
<dbReference type="FunCoup" id="Q5ZKP2">
    <property type="interactions" value="1760"/>
</dbReference>
<dbReference type="STRING" id="9031.ENSGALP00000020355"/>
<dbReference type="PaxDb" id="9031-ENSGALP00000020355"/>
<dbReference type="Ensembl" id="ENSGALT00010022912.1">
    <property type="protein sequence ID" value="ENSGALP00010013242.1"/>
    <property type="gene ID" value="ENSGALG00010009609.1"/>
</dbReference>
<dbReference type="GeneID" id="424311"/>
<dbReference type="KEGG" id="gga:424311"/>
<dbReference type="CTD" id="27249"/>
<dbReference type="VEuPathDB" id="HostDB:geneid_424311"/>
<dbReference type="eggNOG" id="KOG3994">
    <property type="taxonomic scope" value="Eukaryota"/>
</dbReference>
<dbReference type="GeneTree" id="ENSGT00390000015050"/>
<dbReference type="HOGENOM" id="CLU_066240_0_0_1"/>
<dbReference type="InParanoid" id="Q5ZKP2"/>
<dbReference type="OMA" id="PECCGMI"/>
<dbReference type="OrthoDB" id="10263782at2759"/>
<dbReference type="PhylomeDB" id="Q5ZKP2"/>
<dbReference type="TreeFam" id="TF314208"/>
<dbReference type="Reactome" id="R-GGA-9759218">
    <property type="pathway name" value="Cobalamin (Cbl) metabolism"/>
</dbReference>
<dbReference type="PRO" id="PR:Q5ZKP2"/>
<dbReference type="Proteomes" id="UP000000539">
    <property type="component" value="Chromosome 7"/>
</dbReference>
<dbReference type="Bgee" id="ENSGALG00000012473">
    <property type="expression patterns" value="Expressed in liver and 13 other cell types or tissues"/>
</dbReference>
<dbReference type="GO" id="GO:0005737">
    <property type="term" value="C:cytoplasm"/>
    <property type="evidence" value="ECO:0000250"/>
    <property type="project" value="UniProtKB"/>
</dbReference>
<dbReference type="GO" id="GO:0005739">
    <property type="term" value="C:mitochondrion"/>
    <property type="evidence" value="ECO:0000250"/>
    <property type="project" value="UniProtKB"/>
</dbReference>
<dbReference type="GO" id="GO:0009235">
    <property type="term" value="P:cobalamin metabolic process"/>
    <property type="evidence" value="ECO:0000250"/>
    <property type="project" value="UniProtKB"/>
</dbReference>
<dbReference type="InterPro" id="IPR019362">
    <property type="entry name" value="MMADHC"/>
</dbReference>
<dbReference type="PANTHER" id="PTHR13192:SF3">
    <property type="entry name" value="COBALAMIN TRAFFICKING PROTEIN CBLD"/>
    <property type="match status" value="1"/>
</dbReference>
<dbReference type="PANTHER" id="PTHR13192">
    <property type="entry name" value="MY011 PROTEIN"/>
    <property type="match status" value="1"/>
</dbReference>
<dbReference type="Pfam" id="PF10229">
    <property type="entry name" value="MMADHC"/>
    <property type="match status" value="1"/>
</dbReference>
<feature type="transit peptide" description="Mitochondrion" evidence="2">
    <location>
        <begin position="1"/>
        <end position="92"/>
    </location>
</feature>
<feature type="chain" id="PRO_0000019537" description="Cobalamin trafficking protein CblD">
    <location>
        <begin position="93"/>
        <end position="296"/>
    </location>
</feature>
<keyword id="KW-0963">Cytoplasm</keyword>
<keyword id="KW-0496">Mitochondrion</keyword>
<keyword id="KW-1185">Reference proteome</keyword>
<keyword id="KW-0809">Transit peptide</keyword>
<evidence type="ECO:0000250" key="1">
    <source>
        <dbReference type="UniProtKB" id="Q9H3L0"/>
    </source>
</evidence>
<evidence type="ECO:0000255" key="2"/>
<gene>
    <name type="primary">MMADHC</name>
    <name type="ORF">RCJMB04_9n6</name>
</gene>
<name>MMAD_CHICK</name>